<name>BSPH1_MOUSE</name>
<comment type="function">
    <text evidence="4 5 6">Binds sperm in vitro and promotes sperm capacitation (PubMed:22539676, PubMed:24307707). Specifically promotes capacitation induced by high density lipoproteins (HDLs) (PubMed:25602034). Also binds heparin, phospholipid liposomes, and weakly to gelatin (PubMed:22539676). Does not bind chondroitin sulfate B (PubMed:22539676).</text>
</comment>
<comment type="subcellular location">
    <subcellularLocation>
        <location evidence="7">Secreted</location>
    </subcellularLocation>
</comment>
<comment type="tissue specificity">
    <text evidence="3">Expressed only in the epididymis.</text>
</comment>
<comment type="similarity">
    <text evidence="7">Belongs to the seminal plasma protein family.</text>
</comment>
<proteinExistence type="evidence at transcript level"/>
<evidence type="ECO:0000255" key="1"/>
<evidence type="ECO:0000255" key="2">
    <source>
        <dbReference type="PROSITE-ProRule" id="PRU00479"/>
    </source>
</evidence>
<evidence type="ECO:0000269" key="3">
    <source>
    </source>
</evidence>
<evidence type="ECO:0000269" key="4">
    <source>
    </source>
</evidence>
<evidence type="ECO:0000269" key="5">
    <source>
    </source>
</evidence>
<evidence type="ECO:0000269" key="6">
    <source>
    </source>
</evidence>
<evidence type="ECO:0000305" key="7"/>
<organism>
    <name type="scientific">Mus musculus</name>
    <name type="common">Mouse</name>
    <dbReference type="NCBI Taxonomy" id="10090"/>
    <lineage>
        <taxon>Eukaryota</taxon>
        <taxon>Metazoa</taxon>
        <taxon>Chordata</taxon>
        <taxon>Craniata</taxon>
        <taxon>Vertebrata</taxon>
        <taxon>Euteleostomi</taxon>
        <taxon>Mammalia</taxon>
        <taxon>Eutheria</taxon>
        <taxon>Euarchontoglires</taxon>
        <taxon>Glires</taxon>
        <taxon>Rodentia</taxon>
        <taxon>Myomorpha</taxon>
        <taxon>Muroidea</taxon>
        <taxon>Muridae</taxon>
        <taxon>Murinae</taxon>
        <taxon>Mus</taxon>
        <taxon>Mus</taxon>
    </lineage>
</organism>
<keyword id="KW-1015">Disulfide bond</keyword>
<keyword id="KW-0278">Fertilization</keyword>
<keyword id="KW-0325">Glycoprotein</keyword>
<keyword id="KW-1185">Reference proteome</keyword>
<keyword id="KW-0677">Repeat</keyword>
<keyword id="KW-0964">Secreted</keyword>
<keyword id="KW-0732">Signal</keyword>
<sequence length="133" mass="16014">MAQPLDFLLVSICLFHSLFSFQVEDYYAPTIESLIRNPETEDGACVFPFLYRSEIFYDCVNFNLKHKWCSLNKTYQGYWKYCALSDYAPCAFPFWYRHMIYWDCTEDGEVFGKKWCSLTPNYNKDQVWKYCIE</sequence>
<gene>
    <name type="primary">Bsph1</name>
    <name type="synonym">Gm767</name>
</gene>
<reference key="1">
    <citation type="journal article" date="2007" name="Mol. Hum. Reprod.">
        <title>Genomic structure and tissue-specific expression of human and mouse genes encoding homologues of the major bovine seminal plasma proteins.</title>
        <authorList>
            <person name="Lefebvre J."/>
            <person name="Fan J."/>
            <person name="Chevalier S."/>
            <person name="Sullivan R."/>
            <person name="Carmona E."/>
            <person name="Manjunath P."/>
        </authorList>
    </citation>
    <scope>NUCLEOTIDE SEQUENCE [MRNA]</scope>
    <scope>TISSUE SPECIFICITY</scope>
    <source>
        <strain>CD-1</strain>
        <tissue>Epididymis</tissue>
    </source>
</reference>
<reference key="2">
    <citation type="journal article" date="2005" name="Science">
        <title>The transcriptional landscape of the mammalian genome.</title>
        <authorList>
            <person name="Carninci P."/>
            <person name="Kasukawa T."/>
            <person name="Katayama S."/>
            <person name="Gough J."/>
            <person name="Frith M.C."/>
            <person name="Maeda N."/>
            <person name="Oyama R."/>
            <person name="Ravasi T."/>
            <person name="Lenhard B."/>
            <person name="Wells C."/>
            <person name="Kodzius R."/>
            <person name="Shimokawa K."/>
            <person name="Bajic V.B."/>
            <person name="Brenner S.E."/>
            <person name="Batalov S."/>
            <person name="Forrest A.R."/>
            <person name="Zavolan M."/>
            <person name="Davis M.J."/>
            <person name="Wilming L.G."/>
            <person name="Aidinis V."/>
            <person name="Allen J.E."/>
            <person name="Ambesi-Impiombato A."/>
            <person name="Apweiler R."/>
            <person name="Aturaliya R.N."/>
            <person name="Bailey T.L."/>
            <person name="Bansal M."/>
            <person name="Baxter L."/>
            <person name="Beisel K.W."/>
            <person name="Bersano T."/>
            <person name="Bono H."/>
            <person name="Chalk A.M."/>
            <person name="Chiu K.P."/>
            <person name="Choudhary V."/>
            <person name="Christoffels A."/>
            <person name="Clutterbuck D.R."/>
            <person name="Crowe M.L."/>
            <person name="Dalla E."/>
            <person name="Dalrymple B.P."/>
            <person name="de Bono B."/>
            <person name="Della Gatta G."/>
            <person name="di Bernardo D."/>
            <person name="Down T."/>
            <person name="Engstrom P."/>
            <person name="Fagiolini M."/>
            <person name="Faulkner G."/>
            <person name="Fletcher C.F."/>
            <person name="Fukushima T."/>
            <person name="Furuno M."/>
            <person name="Futaki S."/>
            <person name="Gariboldi M."/>
            <person name="Georgii-Hemming P."/>
            <person name="Gingeras T.R."/>
            <person name="Gojobori T."/>
            <person name="Green R.E."/>
            <person name="Gustincich S."/>
            <person name="Harbers M."/>
            <person name="Hayashi Y."/>
            <person name="Hensch T.K."/>
            <person name="Hirokawa N."/>
            <person name="Hill D."/>
            <person name="Huminiecki L."/>
            <person name="Iacono M."/>
            <person name="Ikeo K."/>
            <person name="Iwama A."/>
            <person name="Ishikawa T."/>
            <person name="Jakt M."/>
            <person name="Kanapin A."/>
            <person name="Katoh M."/>
            <person name="Kawasawa Y."/>
            <person name="Kelso J."/>
            <person name="Kitamura H."/>
            <person name="Kitano H."/>
            <person name="Kollias G."/>
            <person name="Krishnan S.P."/>
            <person name="Kruger A."/>
            <person name="Kummerfeld S.K."/>
            <person name="Kurochkin I.V."/>
            <person name="Lareau L.F."/>
            <person name="Lazarevic D."/>
            <person name="Lipovich L."/>
            <person name="Liu J."/>
            <person name="Liuni S."/>
            <person name="McWilliam S."/>
            <person name="Madan Babu M."/>
            <person name="Madera M."/>
            <person name="Marchionni L."/>
            <person name="Matsuda H."/>
            <person name="Matsuzawa S."/>
            <person name="Miki H."/>
            <person name="Mignone F."/>
            <person name="Miyake S."/>
            <person name="Morris K."/>
            <person name="Mottagui-Tabar S."/>
            <person name="Mulder N."/>
            <person name="Nakano N."/>
            <person name="Nakauchi H."/>
            <person name="Ng P."/>
            <person name="Nilsson R."/>
            <person name="Nishiguchi S."/>
            <person name="Nishikawa S."/>
            <person name="Nori F."/>
            <person name="Ohara O."/>
            <person name="Okazaki Y."/>
            <person name="Orlando V."/>
            <person name="Pang K.C."/>
            <person name="Pavan W.J."/>
            <person name="Pavesi G."/>
            <person name="Pesole G."/>
            <person name="Petrovsky N."/>
            <person name="Piazza S."/>
            <person name="Reed J."/>
            <person name="Reid J.F."/>
            <person name="Ring B.Z."/>
            <person name="Ringwald M."/>
            <person name="Rost B."/>
            <person name="Ruan Y."/>
            <person name="Salzberg S.L."/>
            <person name="Sandelin A."/>
            <person name="Schneider C."/>
            <person name="Schoenbach C."/>
            <person name="Sekiguchi K."/>
            <person name="Semple C.A."/>
            <person name="Seno S."/>
            <person name="Sessa L."/>
            <person name="Sheng Y."/>
            <person name="Shibata Y."/>
            <person name="Shimada H."/>
            <person name="Shimada K."/>
            <person name="Silva D."/>
            <person name="Sinclair B."/>
            <person name="Sperling S."/>
            <person name="Stupka E."/>
            <person name="Sugiura K."/>
            <person name="Sultana R."/>
            <person name="Takenaka Y."/>
            <person name="Taki K."/>
            <person name="Tammoja K."/>
            <person name="Tan S.L."/>
            <person name="Tang S."/>
            <person name="Taylor M.S."/>
            <person name="Tegner J."/>
            <person name="Teichmann S.A."/>
            <person name="Ueda H.R."/>
            <person name="van Nimwegen E."/>
            <person name="Verardo R."/>
            <person name="Wei C.L."/>
            <person name="Yagi K."/>
            <person name="Yamanishi H."/>
            <person name="Zabarovsky E."/>
            <person name="Zhu S."/>
            <person name="Zimmer A."/>
            <person name="Hide W."/>
            <person name="Bult C."/>
            <person name="Grimmond S.M."/>
            <person name="Teasdale R.D."/>
            <person name="Liu E.T."/>
            <person name="Brusic V."/>
            <person name="Quackenbush J."/>
            <person name="Wahlestedt C."/>
            <person name="Mattick J.S."/>
            <person name="Hume D.A."/>
            <person name="Kai C."/>
            <person name="Sasaki D."/>
            <person name="Tomaru Y."/>
            <person name="Fukuda S."/>
            <person name="Kanamori-Katayama M."/>
            <person name="Suzuki M."/>
            <person name="Aoki J."/>
            <person name="Arakawa T."/>
            <person name="Iida J."/>
            <person name="Imamura K."/>
            <person name="Itoh M."/>
            <person name="Kato T."/>
            <person name="Kawaji H."/>
            <person name="Kawagashira N."/>
            <person name="Kawashima T."/>
            <person name="Kojima M."/>
            <person name="Kondo S."/>
            <person name="Konno H."/>
            <person name="Nakano K."/>
            <person name="Ninomiya N."/>
            <person name="Nishio T."/>
            <person name="Okada M."/>
            <person name="Plessy C."/>
            <person name="Shibata K."/>
            <person name="Shiraki T."/>
            <person name="Suzuki S."/>
            <person name="Tagami M."/>
            <person name="Waki K."/>
            <person name="Watahiki A."/>
            <person name="Okamura-Oho Y."/>
            <person name="Suzuki H."/>
            <person name="Kawai J."/>
            <person name="Hayashizaki Y."/>
        </authorList>
    </citation>
    <scope>NUCLEOTIDE SEQUENCE [LARGE SCALE MRNA]</scope>
    <source>
        <strain>C57BL/6J</strain>
        <tissue>Epididymis</tissue>
    </source>
</reference>
<reference key="3">
    <citation type="journal article" date="2004" name="Genome Res.">
        <title>The status, quality, and expansion of the NIH full-length cDNA project: the Mammalian Gene Collection (MGC).</title>
        <authorList>
            <consortium name="The MGC Project Team"/>
        </authorList>
    </citation>
    <scope>NUCLEOTIDE SEQUENCE [LARGE SCALE MRNA]</scope>
    <source>
        <tissue>Brain</tissue>
    </source>
</reference>
<reference key="4">
    <citation type="journal article" date="2012" name="Biol. Reprod.">
        <title>Characterization of recombinant murine binder of sperm protein homolog 1 and its role in capacitation.</title>
        <authorList>
            <person name="Plante G."/>
            <person name="Therien I."/>
            <person name="Manjunath P."/>
        </authorList>
    </citation>
    <scope>FUNCTION</scope>
</reference>
<reference key="5">
    <citation type="journal article" date="2014" name="Biol. Reprod.">
        <title>Murine Binder of SPerm homolog 2 (BSPH2): the black sheep of the BSP superfamily.</title>
        <authorList>
            <person name="Plante G."/>
            <person name="Fan J."/>
            <person name="Manjunath P."/>
        </authorList>
    </citation>
    <scope>FUNCTION</scope>
</reference>
<reference key="6">
    <citation type="journal article" date="2015" name="Reproduction">
        <title>Murine binder of sperm protein homolog 1: a new player in HDL-induced capacitation.</title>
        <authorList>
            <person name="Plante G."/>
            <person name="Manjunath P."/>
        </authorList>
    </citation>
    <scope>FUNCTION</scope>
</reference>
<accession>Q3UW26</accession>
<accession>B2RVZ6</accession>
<protein>
    <recommendedName>
        <fullName>Binder of sperm protein homolog 1</fullName>
    </recommendedName>
    <alternativeName>
        <fullName>Bovine seminal plasma protein homolog 1</fullName>
    </alternativeName>
    <alternativeName>
        <fullName>Bovine seminal plasma protein-like 1</fullName>
    </alternativeName>
</protein>
<dbReference type="EMBL" id="DQ227498">
    <property type="protein sequence ID" value="ABB71592.1"/>
    <property type="molecule type" value="mRNA"/>
</dbReference>
<dbReference type="EMBL" id="AK136662">
    <property type="protein sequence ID" value="BAE23093.1"/>
    <property type="molecule type" value="mRNA"/>
</dbReference>
<dbReference type="EMBL" id="BC147454">
    <property type="protein sequence ID" value="AAI47455.1"/>
    <property type="molecule type" value="mRNA"/>
</dbReference>
<dbReference type="EMBL" id="BC147459">
    <property type="protein sequence ID" value="AAI47460.1"/>
    <property type="molecule type" value="mRNA"/>
</dbReference>
<dbReference type="CCDS" id="CCDS20832.1"/>
<dbReference type="RefSeq" id="NP_001028590.1">
    <property type="nucleotide sequence ID" value="NM_001033418.4"/>
</dbReference>
<dbReference type="RefSeq" id="NP_001288611.1">
    <property type="nucleotide sequence ID" value="NM_001301682.1"/>
</dbReference>
<dbReference type="SMR" id="Q3UW26"/>
<dbReference type="FunCoup" id="Q3UW26">
    <property type="interactions" value="13"/>
</dbReference>
<dbReference type="STRING" id="10090.ENSMUSP00000096408"/>
<dbReference type="GlyCosmos" id="Q3UW26">
    <property type="glycosylation" value="1 site, No reported glycans"/>
</dbReference>
<dbReference type="GlyGen" id="Q3UW26">
    <property type="glycosylation" value="1 site"/>
</dbReference>
<dbReference type="PhosphoSitePlus" id="Q3UW26"/>
<dbReference type="PaxDb" id="10090-ENSMUSP00000096408"/>
<dbReference type="ProteomicsDB" id="265246"/>
<dbReference type="Antibodypedia" id="70932">
    <property type="antibodies" value="4 antibodies from 4 providers"/>
</dbReference>
<dbReference type="Ensembl" id="ENSMUST00000098811.4">
    <property type="protein sequence ID" value="ENSMUSP00000096408.2"/>
    <property type="gene ID" value="ENSMUSG00000074378.6"/>
</dbReference>
<dbReference type="GeneID" id="330470"/>
<dbReference type="KEGG" id="mmu:330470"/>
<dbReference type="UCSC" id="uc009ffw.2">
    <property type="organism name" value="mouse"/>
</dbReference>
<dbReference type="AGR" id="MGI:2685613"/>
<dbReference type="CTD" id="100131137"/>
<dbReference type="MGI" id="MGI:2685613">
    <property type="gene designation" value="Bsph1"/>
</dbReference>
<dbReference type="VEuPathDB" id="HostDB:ENSMUSG00000074378"/>
<dbReference type="eggNOG" id="KOG1565">
    <property type="taxonomic scope" value="Eukaryota"/>
</dbReference>
<dbReference type="GeneTree" id="ENSGT00940000163003"/>
<dbReference type="HOGENOM" id="CLU_126630_1_0_1"/>
<dbReference type="InParanoid" id="Q3UW26"/>
<dbReference type="OMA" id="DGIFYDC"/>
<dbReference type="OrthoDB" id="392at9989"/>
<dbReference type="PhylomeDB" id="Q3UW26"/>
<dbReference type="TreeFam" id="TF343543"/>
<dbReference type="BioGRID-ORCS" id="330470">
    <property type="hits" value="0 hits in 77 CRISPR screens"/>
</dbReference>
<dbReference type="PRO" id="PR:Q3UW26"/>
<dbReference type="Proteomes" id="UP000000589">
    <property type="component" value="Chromosome 7"/>
</dbReference>
<dbReference type="RNAct" id="Q3UW26">
    <property type="molecule type" value="protein"/>
</dbReference>
<dbReference type="Bgee" id="ENSMUSG00000074378">
    <property type="expression patterns" value="Expressed in striatum and 3 other cell types or tissues"/>
</dbReference>
<dbReference type="ExpressionAtlas" id="Q3UW26">
    <property type="expression patterns" value="baseline and differential"/>
</dbReference>
<dbReference type="GO" id="GO:0009986">
    <property type="term" value="C:cell surface"/>
    <property type="evidence" value="ECO:0000314"/>
    <property type="project" value="MGI"/>
</dbReference>
<dbReference type="GO" id="GO:0005615">
    <property type="term" value="C:extracellular space"/>
    <property type="evidence" value="ECO:0007669"/>
    <property type="project" value="InterPro"/>
</dbReference>
<dbReference type="GO" id="GO:0008201">
    <property type="term" value="F:heparin binding"/>
    <property type="evidence" value="ECO:0000314"/>
    <property type="project" value="MGI"/>
</dbReference>
<dbReference type="GO" id="GO:0007338">
    <property type="term" value="P:single fertilization"/>
    <property type="evidence" value="ECO:0007669"/>
    <property type="project" value="UniProtKB-KW"/>
</dbReference>
<dbReference type="GO" id="GO:0048240">
    <property type="term" value="P:sperm capacitation"/>
    <property type="evidence" value="ECO:0000314"/>
    <property type="project" value="MGI"/>
</dbReference>
<dbReference type="CDD" id="cd00062">
    <property type="entry name" value="FN2"/>
    <property type="match status" value="1"/>
</dbReference>
<dbReference type="FunFam" id="2.10.10.10:FF:000003">
    <property type="entry name" value="binder of sperm protein homolog 1"/>
    <property type="match status" value="1"/>
</dbReference>
<dbReference type="FunFam" id="2.10.10.10:FF:000005">
    <property type="entry name" value="Epididymal sperm binding protein 1"/>
    <property type="match status" value="1"/>
</dbReference>
<dbReference type="Gene3D" id="2.10.10.10">
    <property type="entry name" value="Fibronectin, type II, collagen-binding"/>
    <property type="match status" value="2"/>
</dbReference>
<dbReference type="InterPro" id="IPR000562">
    <property type="entry name" value="FN_type2_dom"/>
</dbReference>
<dbReference type="InterPro" id="IPR036943">
    <property type="entry name" value="FN_type2_sf"/>
</dbReference>
<dbReference type="InterPro" id="IPR013806">
    <property type="entry name" value="Kringle-like"/>
</dbReference>
<dbReference type="InterPro" id="IPR016356">
    <property type="entry name" value="Seminal_plasma_PDC-109-like"/>
</dbReference>
<dbReference type="InterPro" id="IPR051666">
    <property type="entry name" value="SP_Capacitation_Regulator"/>
</dbReference>
<dbReference type="PANTHER" id="PTHR22918:SF4">
    <property type="entry name" value="BINDER OF SPERM PROTEIN HOMOLOG 1"/>
    <property type="match status" value="1"/>
</dbReference>
<dbReference type="PANTHER" id="PTHR22918">
    <property type="entry name" value="SEMINAL PLASMA PROTEIN"/>
    <property type="match status" value="1"/>
</dbReference>
<dbReference type="Pfam" id="PF00040">
    <property type="entry name" value="fn2"/>
    <property type="match status" value="2"/>
</dbReference>
<dbReference type="PIRSF" id="PIRSF002541">
    <property type="entry name" value="Seminal_plasma_PDC-109"/>
    <property type="match status" value="1"/>
</dbReference>
<dbReference type="PRINTS" id="PR00013">
    <property type="entry name" value="FNTYPEII"/>
</dbReference>
<dbReference type="SMART" id="SM00059">
    <property type="entry name" value="FN2"/>
    <property type="match status" value="2"/>
</dbReference>
<dbReference type="SUPFAM" id="SSF57440">
    <property type="entry name" value="Kringle-like"/>
    <property type="match status" value="2"/>
</dbReference>
<dbReference type="PROSITE" id="PS00023">
    <property type="entry name" value="FN2_1"/>
    <property type="match status" value="1"/>
</dbReference>
<dbReference type="PROSITE" id="PS51092">
    <property type="entry name" value="FN2_2"/>
    <property type="match status" value="2"/>
</dbReference>
<feature type="signal peptide" evidence="1">
    <location>
        <begin position="1"/>
        <end position="20"/>
    </location>
</feature>
<feature type="chain" id="PRO_0000326157" description="Binder of sperm protein homolog 1">
    <location>
        <begin position="21"/>
        <end position="133"/>
    </location>
</feature>
<feature type="domain" description="Fibronectin type-II 1" evidence="2">
    <location>
        <begin position="40"/>
        <end position="84"/>
    </location>
</feature>
<feature type="domain" description="Fibronectin type-II 2" evidence="2">
    <location>
        <begin position="85"/>
        <end position="133"/>
    </location>
</feature>
<feature type="glycosylation site" description="N-linked (GlcNAc...) asparagine" evidence="1">
    <location>
        <position position="72"/>
    </location>
</feature>
<feature type="disulfide bond" evidence="2">
    <location>
        <begin position="45"/>
        <end position="69"/>
    </location>
</feature>
<feature type="disulfide bond" evidence="2">
    <location>
        <begin position="59"/>
        <end position="82"/>
    </location>
</feature>
<feature type="disulfide bond" evidence="2">
    <location>
        <begin position="90"/>
        <end position="116"/>
    </location>
</feature>
<feature type="disulfide bond" evidence="2">
    <location>
        <begin position="104"/>
        <end position="131"/>
    </location>
</feature>